<gene>
    <name evidence="1" type="primary">murI</name>
    <name type="ordered locus">Atu1867</name>
    <name type="ORF">AGR_C_3425</name>
</gene>
<accession>Q8UE93</accession>
<feature type="chain" id="PRO_0000095446" description="Glutamate racemase">
    <location>
        <begin position="1"/>
        <end position="273"/>
    </location>
</feature>
<feature type="active site" description="Proton donor/acceptor" evidence="1">
    <location>
        <position position="83"/>
    </location>
</feature>
<feature type="active site" description="Proton donor/acceptor" evidence="1">
    <location>
        <position position="198"/>
    </location>
</feature>
<feature type="binding site" evidence="1">
    <location>
        <begin position="19"/>
        <end position="20"/>
    </location>
    <ligand>
        <name>substrate</name>
    </ligand>
</feature>
<feature type="binding site" evidence="1">
    <location>
        <begin position="51"/>
        <end position="52"/>
    </location>
    <ligand>
        <name>substrate</name>
    </ligand>
</feature>
<feature type="binding site" evidence="1">
    <location>
        <begin position="84"/>
        <end position="85"/>
    </location>
    <ligand>
        <name>substrate</name>
    </ligand>
</feature>
<feature type="binding site" evidence="1">
    <location>
        <begin position="199"/>
        <end position="200"/>
    </location>
    <ligand>
        <name>substrate</name>
    </ligand>
</feature>
<name>MURI_AGRFC</name>
<dbReference type="EC" id="5.1.1.3" evidence="1"/>
<dbReference type="EMBL" id="AE007869">
    <property type="protein sequence ID" value="AAK87633.1"/>
    <property type="molecule type" value="Genomic_DNA"/>
</dbReference>
<dbReference type="PIR" id="AI2805">
    <property type="entry name" value="AI2805"/>
</dbReference>
<dbReference type="PIR" id="H97584">
    <property type="entry name" value="H97584"/>
</dbReference>
<dbReference type="RefSeq" id="NP_354848.1">
    <property type="nucleotide sequence ID" value="NC_003062.2"/>
</dbReference>
<dbReference type="RefSeq" id="WP_006314071.1">
    <property type="nucleotide sequence ID" value="NC_003062.2"/>
</dbReference>
<dbReference type="SMR" id="Q8UE93"/>
<dbReference type="STRING" id="176299.Atu1867"/>
<dbReference type="EnsemblBacteria" id="AAK87633">
    <property type="protein sequence ID" value="AAK87633"/>
    <property type="gene ID" value="Atu1867"/>
</dbReference>
<dbReference type="GeneID" id="1133905"/>
<dbReference type="KEGG" id="atu:Atu1867"/>
<dbReference type="PATRIC" id="fig|176299.10.peg.1881"/>
<dbReference type="eggNOG" id="COG0796">
    <property type="taxonomic scope" value="Bacteria"/>
</dbReference>
<dbReference type="HOGENOM" id="CLU_052344_2_0_5"/>
<dbReference type="OrthoDB" id="9801055at2"/>
<dbReference type="PhylomeDB" id="Q8UE93"/>
<dbReference type="BioCyc" id="AGRO:ATU1867-MONOMER"/>
<dbReference type="UniPathway" id="UPA00219"/>
<dbReference type="Proteomes" id="UP000000813">
    <property type="component" value="Chromosome circular"/>
</dbReference>
<dbReference type="GO" id="GO:0008881">
    <property type="term" value="F:glutamate racemase activity"/>
    <property type="evidence" value="ECO:0007669"/>
    <property type="project" value="UniProtKB-UniRule"/>
</dbReference>
<dbReference type="GO" id="GO:0071555">
    <property type="term" value="P:cell wall organization"/>
    <property type="evidence" value="ECO:0007669"/>
    <property type="project" value="UniProtKB-KW"/>
</dbReference>
<dbReference type="GO" id="GO:0009252">
    <property type="term" value="P:peptidoglycan biosynthetic process"/>
    <property type="evidence" value="ECO:0007669"/>
    <property type="project" value="UniProtKB-UniRule"/>
</dbReference>
<dbReference type="GO" id="GO:0008360">
    <property type="term" value="P:regulation of cell shape"/>
    <property type="evidence" value="ECO:0007669"/>
    <property type="project" value="UniProtKB-KW"/>
</dbReference>
<dbReference type="Gene3D" id="3.40.50.1860">
    <property type="match status" value="2"/>
</dbReference>
<dbReference type="HAMAP" id="MF_00258">
    <property type="entry name" value="Glu_racemase"/>
    <property type="match status" value="1"/>
</dbReference>
<dbReference type="InterPro" id="IPR015942">
    <property type="entry name" value="Asp/Glu/hydantoin_racemase"/>
</dbReference>
<dbReference type="InterPro" id="IPR001920">
    <property type="entry name" value="Asp/Glu_race"/>
</dbReference>
<dbReference type="InterPro" id="IPR033134">
    <property type="entry name" value="Asp/Glu_racemase_AS_2"/>
</dbReference>
<dbReference type="InterPro" id="IPR004391">
    <property type="entry name" value="Glu_race"/>
</dbReference>
<dbReference type="NCBIfam" id="TIGR00067">
    <property type="entry name" value="glut_race"/>
    <property type="match status" value="1"/>
</dbReference>
<dbReference type="PANTHER" id="PTHR21198">
    <property type="entry name" value="GLUTAMATE RACEMASE"/>
    <property type="match status" value="1"/>
</dbReference>
<dbReference type="PANTHER" id="PTHR21198:SF2">
    <property type="entry name" value="GLUTAMATE RACEMASE"/>
    <property type="match status" value="1"/>
</dbReference>
<dbReference type="Pfam" id="PF01177">
    <property type="entry name" value="Asp_Glu_race"/>
    <property type="match status" value="1"/>
</dbReference>
<dbReference type="SUPFAM" id="SSF53681">
    <property type="entry name" value="Aspartate/glutamate racemase"/>
    <property type="match status" value="2"/>
</dbReference>
<dbReference type="PROSITE" id="PS00924">
    <property type="entry name" value="ASP_GLU_RACEMASE_2"/>
    <property type="match status" value="1"/>
</dbReference>
<reference key="1">
    <citation type="journal article" date="2001" name="Science">
        <title>The genome of the natural genetic engineer Agrobacterium tumefaciens C58.</title>
        <authorList>
            <person name="Wood D.W."/>
            <person name="Setubal J.C."/>
            <person name="Kaul R."/>
            <person name="Monks D.E."/>
            <person name="Kitajima J.P."/>
            <person name="Okura V.K."/>
            <person name="Zhou Y."/>
            <person name="Chen L."/>
            <person name="Wood G.E."/>
            <person name="Almeida N.F. Jr."/>
            <person name="Woo L."/>
            <person name="Chen Y."/>
            <person name="Paulsen I.T."/>
            <person name="Eisen J.A."/>
            <person name="Karp P.D."/>
            <person name="Bovee D. Sr."/>
            <person name="Chapman P."/>
            <person name="Clendenning J."/>
            <person name="Deatherage G."/>
            <person name="Gillet W."/>
            <person name="Grant C."/>
            <person name="Kutyavin T."/>
            <person name="Levy R."/>
            <person name="Li M.-J."/>
            <person name="McClelland E."/>
            <person name="Palmieri A."/>
            <person name="Raymond C."/>
            <person name="Rouse G."/>
            <person name="Saenphimmachak C."/>
            <person name="Wu Z."/>
            <person name="Romero P."/>
            <person name="Gordon D."/>
            <person name="Zhang S."/>
            <person name="Yoo H."/>
            <person name="Tao Y."/>
            <person name="Biddle P."/>
            <person name="Jung M."/>
            <person name="Krespan W."/>
            <person name="Perry M."/>
            <person name="Gordon-Kamm B."/>
            <person name="Liao L."/>
            <person name="Kim S."/>
            <person name="Hendrick C."/>
            <person name="Zhao Z.-Y."/>
            <person name="Dolan M."/>
            <person name="Chumley F."/>
            <person name="Tingey S.V."/>
            <person name="Tomb J.-F."/>
            <person name="Gordon M.P."/>
            <person name="Olson M.V."/>
            <person name="Nester E.W."/>
        </authorList>
    </citation>
    <scope>NUCLEOTIDE SEQUENCE [LARGE SCALE GENOMIC DNA]</scope>
    <source>
        <strain>C58 / ATCC 33970</strain>
    </source>
</reference>
<reference key="2">
    <citation type="journal article" date="2001" name="Science">
        <title>Genome sequence of the plant pathogen and biotechnology agent Agrobacterium tumefaciens C58.</title>
        <authorList>
            <person name="Goodner B."/>
            <person name="Hinkle G."/>
            <person name="Gattung S."/>
            <person name="Miller N."/>
            <person name="Blanchard M."/>
            <person name="Qurollo B."/>
            <person name="Goldman B.S."/>
            <person name="Cao Y."/>
            <person name="Askenazi M."/>
            <person name="Halling C."/>
            <person name="Mullin L."/>
            <person name="Houmiel K."/>
            <person name="Gordon J."/>
            <person name="Vaudin M."/>
            <person name="Iartchouk O."/>
            <person name="Epp A."/>
            <person name="Liu F."/>
            <person name="Wollam C."/>
            <person name="Allinger M."/>
            <person name="Doughty D."/>
            <person name="Scott C."/>
            <person name="Lappas C."/>
            <person name="Markelz B."/>
            <person name="Flanagan C."/>
            <person name="Crowell C."/>
            <person name="Gurson J."/>
            <person name="Lomo C."/>
            <person name="Sear C."/>
            <person name="Strub G."/>
            <person name="Cielo C."/>
            <person name="Slater S."/>
        </authorList>
    </citation>
    <scope>NUCLEOTIDE SEQUENCE [LARGE SCALE GENOMIC DNA]</scope>
    <source>
        <strain>C58 / ATCC 33970</strain>
    </source>
</reference>
<sequence length="273" mass="29980">MLKTSEAAADVLKPVLVFDSGIGGLTVLREARVLMPERGFIYVADDAGFPYGGWEEEALKTRILSLFETLLQDYSPEVCIIACNTAFTLAGADLRARFPDMTFVGTVPAIKPAAERTRSGLVSVLATPGTVKRAYTRDLIQSFATQCHVRLVGSENLARMAESWIRGEPVSDEAVLAEIEPCFIDSDGKRTDIVVLACTHYPFMANVFRRLAPWPVDWLDPAEAIARRARHLVPLPQDAEHPDGFDFAVFTSGKPDFATRRLMQGFGLSVSSN</sequence>
<evidence type="ECO:0000255" key="1">
    <source>
        <dbReference type="HAMAP-Rule" id="MF_00258"/>
    </source>
</evidence>
<protein>
    <recommendedName>
        <fullName evidence="1">Glutamate racemase</fullName>
        <ecNumber evidence="1">5.1.1.3</ecNumber>
    </recommendedName>
</protein>
<comment type="function">
    <text evidence="1">Provides the (R)-glutamate required for cell wall biosynthesis.</text>
</comment>
<comment type="catalytic activity">
    <reaction evidence="1">
        <text>L-glutamate = D-glutamate</text>
        <dbReference type="Rhea" id="RHEA:12813"/>
        <dbReference type="ChEBI" id="CHEBI:29985"/>
        <dbReference type="ChEBI" id="CHEBI:29986"/>
        <dbReference type="EC" id="5.1.1.3"/>
    </reaction>
</comment>
<comment type="pathway">
    <text evidence="1">Cell wall biogenesis; peptidoglycan biosynthesis.</text>
</comment>
<comment type="similarity">
    <text evidence="1">Belongs to the aspartate/glutamate racemases family.</text>
</comment>
<keyword id="KW-0133">Cell shape</keyword>
<keyword id="KW-0961">Cell wall biogenesis/degradation</keyword>
<keyword id="KW-0413">Isomerase</keyword>
<keyword id="KW-0573">Peptidoglycan synthesis</keyword>
<keyword id="KW-1185">Reference proteome</keyword>
<organism>
    <name type="scientific">Agrobacterium fabrum (strain C58 / ATCC 33970)</name>
    <name type="common">Agrobacterium tumefaciens (strain C58)</name>
    <dbReference type="NCBI Taxonomy" id="176299"/>
    <lineage>
        <taxon>Bacteria</taxon>
        <taxon>Pseudomonadati</taxon>
        <taxon>Pseudomonadota</taxon>
        <taxon>Alphaproteobacteria</taxon>
        <taxon>Hyphomicrobiales</taxon>
        <taxon>Rhizobiaceae</taxon>
        <taxon>Rhizobium/Agrobacterium group</taxon>
        <taxon>Agrobacterium</taxon>
        <taxon>Agrobacterium tumefaciens complex</taxon>
    </lineage>
</organism>
<proteinExistence type="inferred from homology"/>